<accession>P10460</accession>
<name>3S1C_LATLA</name>
<protein>
    <recommendedName>
        <fullName>Short neurotoxin C</fullName>
    </recommendedName>
</protein>
<dbReference type="PIR" id="E25866">
    <property type="entry name" value="E25866"/>
</dbReference>
<dbReference type="SMR" id="P10460"/>
<dbReference type="Proteomes" id="UP000694406">
    <property type="component" value="Unplaced"/>
</dbReference>
<dbReference type="GO" id="GO:0005576">
    <property type="term" value="C:extracellular region"/>
    <property type="evidence" value="ECO:0007669"/>
    <property type="project" value="UniProtKB-SubCell"/>
</dbReference>
<dbReference type="GO" id="GO:0030550">
    <property type="term" value="F:acetylcholine receptor inhibitor activity"/>
    <property type="evidence" value="ECO:0007669"/>
    <property type="project" value="UniProtKB-KW"/>
</dbReference>
<dbReference type="GO" id="GO:0099106">
    <property type="term" value="F:ion channel regulator activity"/>
    <property type="evidence" value="ECO:0007669"/>
    <property type="project" value="UniProtKB-KW"/>
</dbReference>
<dbReference type="GO" id="GO:0090729">
    <property type="term" value="F:toxin activity"/>
    <property type="evidence" value="ECO:0007669"/>
    <property type="project" value="UniProtKB-KW"/>
</dbReference>
<dbReference type="CDD" id="cd00206">
    <property type="entry name" value="TFP_snake_toxin"/>
    <property type="match status" value="1"/>
</dbReference>
<dbReference type="FunFam" id="2.10.60.10:FF:000024">
    <property type="entry name" value="Cytotoxin 1"/>
    <property type="match status" value="1"/>
</dbReference>
<dbReference type="Gene3D" id="2.10.60.10">
    <property type="entry name" value="CD59"/>
    <property type="match status" value="1"/>
</dbReference>
<dbReference type="InterPro" id="IPR003571">
    <property type="entry name" value="Snake_3FTx"/>
</dbReference>
<dbReference type="InterPro" id="IPR045860">
    <property type="entry name" value="Snake_toxin-like_sf"/>
</dbReference>
<dbReference type="InterPro" id="IPR018354">
    <property type="entry name" value="Snake_toxin_con_site"/>
</dbReference>
<dbReference type="InterPro" id="IPR054131">
    <property type="entry name" value="Toxin_cobra-type"/>
</dbReference>
<dbReference type="Pfam" id="PF21947">
    <property type="entry name" value="Toxin_cobra-type"/>
    <property type="match status" value="1"/>
</dbReference>
<dbReference type="SUPFAM" id="SSF57302">
    <property type="entry name" value="Snake toxin-like"/>
    <property type="match status" value="1"/>
</dbReference>
<dbReference type="PROSITE" id="PS00272">
    <property type="entry name" value="SNAKE_TOXIN"/>
    <property type="match status" value="1"/>
</dbReference>
<comment type="function">
    <text>Binds to muscle nicotinic acetylcholine receptor (nAChR) and inhibit acetylcholine from binding to the receptor, thereby impairing neuromuscular transmission.</text>
</comment>
<comment type="subcellular location">
    <subcellularLocation>
        <location evidence="3">Secreted</location>
    </subcellularLocation>
</comment>
<comment type="tissue specificity">
    <text evidence="4">Expressed by the venom gland.</text>
</comment>
<comment type="similarity">
    <text evidence="4">Belongs to the three-finger toxin family. Short-chain subfamily. Type I alpha-neurotoxin sub-subfamily.</text>
</comment>
<organism>
    <name type="scientific">Laticauda laticaudata</name>
    <name type="common">Blue-ringed sea krait</name>
    <name type="synonym">Blue-lipped sea krait</name>
    <dbReference type="NCBI Taxonomy" id="8630"/>
    <lineage>
        <taxon>Eukaryota</taxon>
        <taxon>Metazoa</taxon>
        <taxon>Chordata</taxon>
        <taxon>Craniata</taxon>
        <taxon>Vertebrata</taxon>
        <taxon>Euteleostomi</taxon>
        <taxon>Lepidosauria</taxon>
        <taxon>Squamata</taxon>
        <taxon>Bifurcata</taxon>
        <taxon>Unidentata</taxon>
        <taxon>Episquamata</taxon>
        <taxon>Toxicofera</taxon>
        <taxon>Serpentes</taxon>
        <taxon>Colubroidea</taxon>
        <taxon>Elapidae</taxon>
        <taxon>Laticaudinae</taxon>
        <taxon>Laticauda</taxon>
    </lineage>
</organism>
<keyword id="KW-0008">Acetylcholine receptor inhibiting toxin</keyword>
<keyword id="KW-0903">Direct protein sequencing</keyword>
<keyword id="KW-1015">Disulfide bond</keyword>
<keyword id="KW-0872">Ion channel impairing toxin</keyword>
<keyword id="KW-0528">Neurotoxin</keyword>
<keyword id="KW-0629">Postsynaptic neurotoxin</keyword>
<keyword id="KW-1185">Reference proteome</keyword>
<keyword id="KW-0964">Secreted</keyword>
<keyword id="KW-0800">Toxin</keyword>
<reference key="1">
    <citation type="journal article" date="1986" name="Biochemistry">
        <title>Stopped-flow fluorescence studies on binding kinetics of neurotoxins with acetylcholine receptor.</title>
        <authorList>
            <person name="Endo T."/>
            <person name="Nakanishi M."/>
            <person name="Furukawa S."/>
            <person name="Joubert F.J."/>
            <person name="Tamiya N."/>
            <person name="Hayashi K."/>
        </authorList>
    </citation>
    <scope>PROTEIN SEQUENCE</scope>
    <scope>SUBCELLULAR LOCATION</scope>
    <source>
        <tissue>Venom</tissue>
    </source>
</reference>
<evidence type="ECO:0000250" key="1">
    <source>
        <dbReference type="UniProtKB" id="P0C1Z0"/>
    </source>
</evidence>
<evidence type="ECO:0000256" key="2">
    <source>
        <dbReference type="SAM" id="MobiDB-lite"/>
    </source>
</evidence>
<evidence type="ECO:0000269" key="3">
    <source>
    </source>
</evidence>
<evidence type="ECO:0000305" key="4"/>
<feature type="chain" id="PRO_0000093586" description="Short neurotoxin C" evidence="3">
    <location>
        <begin position="1"/>
        <end position="62"/>
    </location>
</feature>
<feature type="region of interest" description="Disordered" evidence="2">
    <location>
        <begin position="1"/>
        <end position="22"/>
    </location>
</feature>
<feature type="compositionally biased region" description="Polar residues" evidence="2">
    <location>
        <begin position="1"/>
        <end position="16"/>
    </location>
</feature>
<feature type="disulfide bond" evidence="1">
    <location>
        <begin position="3"/>
        <end position="24"/>
    </location>
</feature>
<feature type="disulfide bond" evidence="1">
    <location>
        <begin position="17"/>
        <end position="41"/>
    </location>
</feature>
<feature type="disulfide bond" evidence="1">
    <location>
        <begin position="43"/>
        <end position="54"/>
    </location>
</feature>
<feature type="disulfide bond" evidence="1">
    <location>
        <begin position="55"/>
        <end position="60"/>
    </location>
</feature>
<proteinExistence type="evidence at protein level"/>
<sequence>RRCFNQQSSQPQTNKSCPPGENSCYRKQWRDHRGTIIERGCGCPTVKPGVKLRCCQSEDCNN</sequence>